<keyword id="KW-0479">Metal-binding</keyword>
<keyword id="KW-0480">Metal-thiolate cluster</keyword>
<reference key="1">
    <citation type="journal article" date="1990" name="FEBS Lett.">
        <title>A gene from pea (Pisum sativum L.) with homology to metallothionein genes.</title>
        <authorList>
            <person name="Evans I.M."/>
            <person name="Gatehouse L.N."/>
            <person name="Gatehouse J.A."/>
            <person name="Robinson N.J."/>
            <person name="Croy R.R.D."/>
        </authorList>
    </citation>
    <scope>NUCLEOTIDE SEQUENCE [GENOMIC DNA]</scope>
    <source>
        <strain>cv. Feltham First</strain>
        <tissue>Root</tissue>
    </source>
</reference>
<reference key="2">
    <citation type="journal article" date="1991" name="FEBS Lett.">
        <title>A plant metallothionein produced in E. coli.</title>
        <authorList>
            <person name="Kille P."/>
            <person name="Winge D.R."/>
            <person name="Harwood J.L."/>
            <person name="Kay J."/>
        </authorList>
    </citation>
    <scope>NUCLEOTIDE SEQUENCE [GENOMIC DNA]</scope>
</reference>
<sequence>MSGCGCGSSCNCGDSCKCNKRSSGLSYSEMETTETVILGVGPAKIQFEGAEMSAASEDGGCKCGDNCTCDPCNCK</sequence>
<accession>P20830</accession>
<name>MT1_PEA</name>
<comment type="function">
    <text>Metallothioneins have a high content of cysteine residues that bind various heavy metals.</text>
</comment>
<comment type="similarity">
    <text evidence="1">Belongs to the metallothionein superfamily. Type 15 family.</text>
</comment>
<feature type="chain" id="PRO_0000197380" description="Metallothionein-like protein 1">
    <location>
        <begin position="1"/>
        <end position="75"/>
    </location>
</feature>
<organism>
    <name type="scientific">Pisum sativum</name>
    <name type="common">Garden pea</name>
    <name type="synonym">Lathyrus oleraceus</name>
    <dbReference type="NCBI Taxonomy" id="3888"/>
    <lineage>
        <taxon>Eukaryota</taxon>
        <taxon>Viridiplantae</taxon>
        <taxon>Streptophyta</taxon>
        <taxon>Embryophyta</taxon>
        <taxon>Tracheophyta</taxon>
        <taxon>Spermatophyta</taxon>
        <taxon>Magnoliopsida</taxon>
        <taxon>eudicotyledons</taxon>
        <taxon>Gunneridae</taxon>
        <taxon>Pentapetalae</taxon>
        <taxon>rosids</taxon>
        <taxon>fabids</taxon>
        <taxon>Fabales</taxon>
        <taxon>Fabaceae</taxon>
        <taxon>Papilionoideae</taxon>
        <taxon>50 kb inversion clade</taxon>
        <taxon>NPAAA clade</taxon>
        <taxon>Hologalegina</taxon>
        <taxon>IRL clade</taxon>
        <taxon>Fabeae</taxon>
        <taxon>Pisum</taxon>
    </lineage>
</organism>
<proteinExistence type="inferred from homology"/>
<gene>
    <name type="primary">MTA</name>
</gene>
<dbReference type="EMBL" id="Z23097">
    <property type="protein sequence ID" value="CAA80645.1"/>
    <property type="molecule type" value="Genomic_DNA"/>
</dbReference>
<dbReference type="PIR" id="S09098">
    <property type="entry name" value="S09098"/>
</dbReference>
<dbReference type="EnsemblPlants" id="Psat7g239160.1">
    <property type="protein sequence ID" value="Psat7g239160.1.cds"/>
    <property type="gene ID" value="Psat7g239160"/>
</dbReference>
<dbReference type="Gramene" id="Psat7g239160.1">
    <property type="protein sequence ID" value="Psat7g239160.1.cds"/>
    <property type="gene ID" value="Psat7g239160"/>
</dbReference>
<dbReference type="OrthoDB" id="1111048at2759"/>
<dbReference type="GO" id="GO:0046872">
    <property type="term" value="F:metal ion binding"/>
    <property type="evidence" value="ECO:0007669"/>
    <property type="project" value="UniProtKB-KW"/>
</dbReference>
<dbReference type="InterPro" id="IPR000347">
    <property type="entry name" value="Metalthion_15p"/>
</dbReference>
<dbReference type="PANTHER" id="PTHR33543:SF10">
    <property type="entry name" value="METALLOTHIONEIN-LIKE PROTEIN"/>
    <property type="match status" value="1"/>
</dbReference>
<dbReference type="PANTHER" id="PTHR33543">
    <property type="entry name" value="METALLOTHIONEIN-LIKE PROTEIN 2A"/>
    <property type="match status" value="1"/>
</dbReference>
<dbReference type="Pfam" id="PF01439">
    <property type="entry name" value="Metallothio_2"/>
    <property type="match status" value="1"/>
</dbReference>
<protein>
    <recommendedName>
        <fullName>Metallothionein-like protein 1</fullName>
        <shortName>MT-1</shortName>
    </recommendedName>
</protein>
<evidence type="ECO:0000305" key="1"/>